<keyword id="KW-0027">Amidation</keyword>
<keyword id="KW-0903">Direct protein sequencing</keyword>
<keyword id="KW-0527">Neuropeptide</keyword>
<keyword id="KW-0964">Secreted</keyword>
<dbReference type="GO" id="GO:0005576">
    <property type="term" value="C:extracellular region"/>
    <property type="evidence" value="ECO:0007669"/>
    <property type="project" value="UniProtKB-SubCell"/>
</dbReference>
<dbReference type="GO" id="GO:0007218">
    <property type="term" value="P:neuropeptide signaling pathway"/>
    <property type="evidence" value="ECO:0007669"/>
    <property type="project" value="UniProtKB-KW"/>
</dbReference>
<proteinExistence type="evidence at protein level"/>
<evidence type="ECO:0000250" key="1">
    <source>
        <dbReference type="UniProtKB" id="P82619"/>
    </source>
</evidence>
<evidence type="ECO:0000255" key="2"/>
<evidence type="ECO:0000269" key="3">
    <source>
    </source>
</evidence>
<evidence type="ECO:0000305" key="4"/>
<organism>
    <name type="scientific">Pseudoderopeltis cf. bimaculata JT-2004</name>
    <name type="common">Harlequin cockroach</name>
    <dbReference type="NCBI Taxonomy" id="304880"/>
    <lineage>
        <taxon>Eukaryota</taxon>
        <taxon>Metazoa</taxon>
        <taxon>Ecdysozoa</taxon>
        <taxon>Arthropoda</taxon>
        <taxon>Hexapoda</taxon>
        <taxon>Insecta</taxon>
        <taxon>Pterygota</taxon>
        <taxon>Neoptera</taxon>
        <taxon>Polyneoptera</taxon>
        <taxon>Dictyoptera</taxon>
        <taxon>Blattodea</taxon>
        <taxon>Blattoidea</taxon>
        <taxon>Blattidae</taxon>
        <taxon>Blattinae</taxon>
        <taxon>Pseudoderopeltis</taxon>
    </lineage>
</organism>
<accession>P84419</accession>
<sequence>DHLPHDVYSPRL</sequence>
<protein>
    <recommendedName>
        <fullName>Pyrokinin-4</fullName>
    </recommendedName>
    <alternativeName>
        <fullName>YXPRL-amide</fullName>
    </alternativeName>
</protein>
<feature type="peptide" id="PRO_0000044336" description="Pyrokinin-4">
    <location>
        <begin position="1"/>
        <end position="12"/>
    </location>
</feature>
<feature type="modified residue" description="Leucine amide" evidence="3">
    <location>
        <position position="12"/>
    </location>
</feature>
<name>PPK4_PSEBJ</name>
<reference evidence="4" key="1">
    <citation type="journal article" date="2005" name="Peptides">
        <title>Peptidomics of neurohemal organs from species of the cockroach family Blattidae: how do neuropeptides of closely related species differ?</title>
        <authorList>
            <person name="Predel R."/>
            <person name="Gaede G."/>
        </authorList>
    </citation>
    <scope>PROTEIN SEQUENCE</scope>
    <scope>MASS SPECTROMETRY</scope>
    <scope>AMIDATION AT LEU-12</scope>
    <source>
        <tissue evidence="3">Corpora allata</tissue>
    </source>
</reference>
<comment type="function">
    <text evidence="1">Mediates visceral muscle contractile activity (myotropic activity).</text>
</comment>
<comment type="subcellular location">
    <subcellularLocation>
        <location evidence="4">Secreted</location>
    </subcellularLocation>
</comment>
<comment type="mass spectrometry"/>
<comment type="similarity">
    <text evidence="2">Belongs to the pyrokinin family.</text>
</comment>